<reference key="1">
    <citation type="journal article" date="2004" name="Science">
        <title>A putative Ca2+ and calmodulin-dependent protein kinase required for bacterial and fungal symbioses.</title>
        <authorList>
            <person name="Levy J."/>
            <person name="Bres C."/>
            <person name="Geurts R."/>
            <person name="Chalhoub B."/>
            <person name="Kulikova O."/>
            <person name="Duc G."/>
            <person name="Journet E.-P."/>
            <person name="Ane J.-M."/>
            <person name="Lauber E."/>
            <person name="Bisseling T."/>
            <person name="Denarie J."/>
            <person name="Rosenberg C."/>
            <person name="Debelle F."/>
        </authorList>
    </citation>
    <scope>NUCLEOTIDE SEQUENCE [GENOMIC DNA]</scope>
    <scope>MUTAGENESIS OF SER-24 AND GLY-202</scope>
    <source>
        <strain>cv. Frisson</strain>
    </source>
</reference>
<reference key="2">
    <citation type="journal article" date="2004" name="Proc. Natl. Acad. Sci. U.S.A.">
        <title>A Ca2+/calmodulin-dependent protein kinase required for symbiotic nodule development: gene identification by transcript-based cloning.</title>
        <authorList>
            <person name="Mitra R.M."/>
            <person name="Gleason C.A."/>
            <person name="Edwards A."/>
            <person name="Hadfield J."/>
            <person name="Downie J.A."/>
            <person name="Oldroyd G.E.D."/>
            <person name="Long S.R."/>
        </authorList>
    </citation>
    <scope>NUCLEOTIDE SEQUENCE [MRNA] OF 21-465</scope>
    <source>
        <tissue>Root</tissue>
    </source>
</reference>
<accession>Q6RET6</accession>
<accession>Q6RET4</accession>
<accession>Q703H2</accession>
<gene>
    <name type="primary">SYM9</name>
</gene>
<sequence length="527" mass="59227">MEYGTRKLSDVYEVSEILGRGGFSVVRKGTRKSNNDDEKSQSQSKSQSQSQVAIKTLRRLGTSNNLPRKKDGGENSTETMMKFPTMRQVSVSDALLTNEILVMRRIVENVSPHPNVIDLYDVYEDTNGVHLVLELCSGGELFDRIVAQDKYSETEASTVVHQIVAGLEAIHRANIIHRDLKPENCLFLDVGKDSSLKIMDFGLSSVEEFTDPVVGLFGSIDYVSPEALSQGKITTKSDMWSLGVILYILLSGYPPFIAQNNRQKQQMILNGNFSFYEKTWKGISQSAKNLISSLLTVDPAKRPSAQELLSDPWVKGEKAKDDQMDPEIVSRLQRFNARRKLRAAAIASVWSSTIFLRTKKLKSLVGSYDLKEDEIENLRMHFKKICADRDNATLCEFEEVLKAMKMPSLIPFAARIFDLFDNNRDGTVDMREILCGFSSLKNSKGEDALRLCFQMYDTDRSGCITKEEVASMLRALPYDCLPTDITEPGKLDEIFDLMDANSDGKVTFDEFKAAMQRDSSLQDVVLS</sequence>
<dbReference type="EC" id="2.7.11.17"/>
<dbReference type="EMBL" id="AY502067">
    <property type="protein sequence ID" value="AAS55542.1"/>
    <property type="status" value="ALT_SEQ"/>
    <property type="molecule type" value="Genomic_DNA"/>
</dbReference>
<dbReference type="EMBL" id="AY502069">
    <property type="protein sequence ID" value="AAS55544.1"/>
    <property type="status" value="ALT_SEQ"/>
    <property type="molecule type" value="Genomic_DNA"/>
</dbReference>
<dbReference type="EMBL" id="AY502068">
    <property type="protein sequence ID" value="AAS55543.1"/>
    <property type="status" value="ALT_SEQ"/>
    <property type="molecule type" value="Genomic_DNA"/>
</dbReference>
<dbReference type="EMBL" id="AJ621916">
    <property type="protein sequence ID" value="CAF21911.1"/>
    <property type="molecule type" value="mRNA"/>
</dbReference>
<dbReference type="SMR" id="Q6RET6"/>
<dbReference type="GO" id="GO:0016020">
    <property type="term" value="C:membrane"/>
    <property type="evidence" value="ECO:0007669"/>
    <property type="project" value="UniProtKB-SubCell"/>
</dbReference>
<dbReference type="GO" id="GO:0005524">
    <property type="term" value="F:ATP binding"/>
    <property type="evidence" value="ECO:0007669"/>
    <property type="project" value="UniProtKB-KW"/>
</dbReference>
<dbReference type="GO" id="GO:0005509">
    <property type="term" value="F:calcium ion binding"/>
    <property type="evidence" value="ECO:0007669"/>
    <property type="project" value="InterPro"/>
</dbReference>
<dbReference type="GO" id="GO:0004683">
    <property type="term" value="F:calcium/calmodulin-dependent protein kinase activity"/>
    <property type="evidence" value="ECO:0007669"/>
    <property type="project" value="UniProtKB-EC"/>
</dbReference>
<dbReference type="GO" id="GO:0005516">
    <property type="term" value="F:calmodulin binding"/>
    <property type="evidence" value="ECO:0007669"/>
    <property type="project" value="UniProtKB-KW"/>
</dbReference>
<dbReference type="GO" id="GO:0106310">
    <property type="term" value="F:protein serine kinase activity"/>
    <property type="evidence" value="ECO:0007669"/>
    <property type="project" value="RHEA"/>
</dbReference>
<dbReference type="GO" id="GO:0009877">
    <property type="term" value="P:nodulation"/>
    <property type="evidence" value="ECO:0007669"/>
    <property type="project" value="UniProtKB-KW"/>
</dbReference>
<dbReference type="CDD" id="cd00051">
    <property type="entry name" value="EFh"/>
    <property type="match status" value="2"/>
</dbReference>
<dbReference type="CDD" id="cd05117">
    <property type="entry name" value="STKc_CAMK"/>
    <property type="match status" value="1"/>
</dbReference>
<dbReference type="FunFam" id="1.10.510.10:FF:000610">
    <property type="entry name" value="Calcium and calcium/calmodulin-dependent serine/threonine-protein kinase"/>
    <property type="match status" value="1"/>
</dbReference>
<dbReference type="FunFam" id="3.30.200.20:FF:001144">
    <property type="entry name" value="Calcium and calcium/calmodulin-dependent serine/threonine-protein kinase DMI-3"/>
    <property type="match status" value="1"/>
</dbReference>
<dbReference type="FunFam" id="1.10.238.10:FF:000249">
    <property type="entry name" value="calcium and calcium/calmodulin-dependent serine/threonine-protein kinase DMI-3"/>
    <property type="match status" value="1"/>
</dbReference>
<dbReference type="Gene3D" id="1.10.238.10">
    <property type="entry name" value="EF-hand"/>
    <property type="match status" value="1"/>
</dbReference>
<dbReference type="Gene3D" id="3.30.200.20">
    <property type="entry name" value="Phosphorylase Kinase, domain 1"/>
    <property type="match status" value="1"/>
</dbReference>
<dbReference type="Gene3D" id="1.10.510.10">
    <property type="entry name" value="Transferase(Phosphotransferase) domain 1"/>
    <property type="match status" value="1"/>
</dbReference>
<dbReference type="InterPro" id="IPR050205">
    <property type="entry name" value="CDPK_Ser/Thr_kinases"/>
</dbReference>
<dbReference type="InterPro" id="IPR011992">
    <property type="entry name" value="EF-hand-dom_pair"/>
</dbReference>
<dbReference type="InterPro" id="IPR018247">
    <property type="entry name" value="EF_Hand_1_Ca_BS"/>
</dbReference>
<dbReference type="InterPro" id="IPR002048">
    <property type="entry name" value="EF_hand_dom"/>
</dbReference>
<dbReference type="InterPro" id="IPR011009">
    <property type="entry name" value="Kinase-like_dom_sf"/>
</dbReference>
<dbReference type="InterPro" id="IPR000719">
    <property type="entry name" value="Prot_kinase_dom"/>
</dbReference>
<dbReference type="InterPro" id="IPR008271">
    <property type="entry name" value="Ser/Thr_kinase_AS"/>
</dbReference>
<dbReference type="PANTHER" id="PTHR24349">
    <property type="entry name" value="SERINE/THREONINE-PROTEIN KINASE"/>
    <property type="match status" value="1"/>
</dbReference>
<dbReference type="Pfam" id="PF13202">
    <property type="entry name" value="EF-hand_5"/>
    <property type="match status" value="1"/>
</dbReference>
<dbReference type="Pfam" id="PF13499">
    <property type="entry name" value="EF-hand_7"/>
    <property type="match status" value="1"/>
</dbReference>
<dbReference type="Pfam" id="PF00069">
    <property type="entry name" value="Pkinase"/>
    <property type="match status" value="1"/>
</dbReference>
<dbReference type="SMART" id="SM00054">
    <property type="entry name" value="EFh"/>
    <property type="match status" value="3"/>
</dbReference>
<dbReference type="SMART" id="SM00220">
    <property type="entry name" value="S_TKc"/>
    <property type="match status" value="1"/>
</dbReference>
<dbReference type="SUPFAM" id="SSF47473">
    <property type="entry name" value="EF-hand"/>
    <property type="match status" value="1"/>
</dbReference>
<dbReference type="SUPFAM" id="SSF56112">
    <property type="entry name" value="Protein kinase-like (PK-like)"/>
    <property type="match status" value="1"/>
</dbReference>
<dbReference type="PROSITE" id="PS00018">
    <property type="entry name" value="EF_HAND_1"/>
    <property type="match status" value="3"/>
</dbReference>
<dbReference type="PROSITE" id="PS50222">
    <property type="entry name" value="EF_HAND_2"/>
    <property type="match status" value="3"/>
</dbReference>
<dbReference type="PROSITE" id="PS50011">
    <property type="entry name" value="PROTEIN_KINASE_DOM"/>
    <property type="match status" value="1"/>
</dbReference>
<dbReference type="PROSITE" id="PS00108">
    <property type="entry name" value="PROTEIN_KINASE_ST"/>
    <property type="match status" value="1"/>
</dbReference>
<proteinExistence type="evidence at protein level"/>
<comment type="function">
    <text>Protein kinase that recognizes the calcium spiking induced by Nod factors and translates this signal to components controlling nodulation and mycorrhizal infection responses.</text>
</comment>
<comment type="catalytic activity">
    <reaction>
        <text>L-seryl-[protein] + ATP = O-phospho-L-seryl-[protein] + ADP + H(+)</text>
        <dbReference type="Rhea" id="RHEA:17989"/>
        <dbReference type="Rhea" id="RHEA-COMP:9863"/>
        <dbReference type="Rhea" id="RHEA-COMP:11604"/>
        <dbReference type="ChEBI" id="CHEBI:15378"/>
        <dbReference type="ChEBI" id="CHEBI:29999"/>
        <dbReference type="ChEBI" id="CHEBI:30616"/>
        <dbReference type="ChEBI" id="CHEBI:83421"/>
        <dbReference type="ChEBI" id="CHEBI:456216"/>
        <dbReference type="EC" id="2.7.11.17"/>
    </reaction>
</comment>
<comment type="catalytic activity">
    <reaction>
        <text>L-threonyl-[protein] + ATP = O-phospho-L-threonyl-[protein] + ADP + H(+)</text>
        <dbReference type="Rhea" id="RHEA:46608"/>
        <dbReference type="Rhea" id="RHEA-COMP:11060"/>
        <dbReference type="Rhea" id="RHEA-COMP:11605"/>
        <dbReference type="ChEBI" id="CHEBI:15378"/>
        <dbReference type="ChEBI" id="CHEBI:30013"/>
        <dbReference type="ChEBI" id="CHEBI:30616"/>
        <dbReference type="ChEBI" id="CHEBI:61977"/>
        <dbReference type="ChEBI" id="CHEBI:456216"/>
        <dbReference type="EC" id="2.7.11.17"/>
    </reaction>
</comment>
<comment type="activity regulation">
    <text evidence="1">Activated by calcium. Autophosphorylation may play an important role in the regulation of the kinase activity (By similarity).</text>
</comment>
<comment type="subcellular location">
    <subcellularLocation>
        <location evidence="8">Membrane</location>
        <topology evidence="8">Single-pass membrane protein</topology>
    </subcellularLocation>
</comment>
<comment type="PTM">
    <text evidence="1">Autophosphorylation.</text>
</comment>
<comment type="similarity">
    <text evidence="8">Belongs to the protein kinase superfamily. CAMK Ser/Thr protein kinase family. CaMK subfamily.</text>
</comment>
<comment type="sequence caution" evidence="8">
    <conflict type="erroneous gene model prediction">
        <sequence resource="EMBL-CDS" id="AAS55542"/>
    </conflict>
</comment>
<comment type="sequence caution" evidence="8">
    <conflict type="erroneous gene model prediction">
        <sequence resource="EMBL-CDS" id="AAS55543"/>
    </conflict>
</comment>
<comment type="sequence caution" evidence="8">
    <conflict type="erroneous gene model prediction">
        <sequence resource="EMBL-CDS" id="AAS55544"/>
    </conflict>
</comment>
<name>CCAMK_PEA</name>
<organism>
    <name type="scientific">Pisum sativum</name>
    <name type="common">Garden pea</name>
    <name type="synonym">Lathyrus oleraceus</name>
    <dbReference type="NCBI Taxonomy" id="3888"/>
    <lineage>
        <taxon>Eukaryota</taxon>
        <taxon>Viridiplantae</taxon>
        <taxon>Streptophyta</taxon>
        <taxon>Embryophyta</taxon>
        <taxon>Tracheophyta</taxon>
        <taxon>Spermatophyta</taxon>
        <taxon>Magnoliopsida</taxon>
        <taxon>eudicotyledons</taxon>
        <taxon>Gunneridae</taxon>
        <taxon>Pentapetalae</taxon>
        <taxon>rosids</taxon>
        <taxon>fabids</taxon>
        <taxon>Fabales</taxon>
        <taxon>Fabaceae</taxon>
        <taxon>Papilionoideae</taxon>
        <taxon>50 kb inversion clade</taxon>
        <taxon>NPAAA clade</taxon>
        <taxon>Hologalegina</taxon>
        <taxon>IRL clade</taxon>
        <taxon>Fabeae</taxon>
        <taxon>Pisum</taxon>
    </lineage>
</organism>
<feature type="chain" id="PRO_0000085700" description="Calcium and calcium/calmodulin-dependent serine/threonine-protein kinase">
    <location>
        <begin position="1"/>
        <end position="527" status="greater than"/>
    </location>
</feature>
<feature type="transmembrane region" description="Helical" evidence="2">
    <location>
        <begin position="239"/>
        <end position="255"/>
    </location>
</feature>
<feature type="domain" description="Protein kinase" evidence="3">
    <location>
        <begin position="12"/>
        <end position="314"/>
    </location>
</feature>
<feature type="domain" description="EF-hand 1" evidence="4">
    <location>
        <begin position="408"/>
        <end position="443"/>
    </location>
</feature>
<feature type="domain" description="EF-hand 2" evidence="4">
    <location>
        <begin position="444"/>
        <end position="479"/>
    </location>
</feature>
<feature type="domain" description="EF-hand 3" evidence="4">
    <location>
        <begin position="486"/>
        <end position="521"/>
    </location>
</feature>
<feature type="region of interest" description="Disordered" evidence="6">
    <location>
        <begin position="25"/>
        <end position="51"/>
    </location>
</feature>
<feature type="region of interest" description="Disordered" evidence="6">
    <location>
        <begin position="59"/>
        <end position="78"/>
    </location>
</feature>
<feature type="region of interest" description="Calmodulin-binding" evidence="1">
    <location>
        <begin position="337"/>
        <end position="350"/>
    </location>
</feature>
<feature type="coiled-coil region" evidence="2">
    <location>
        <begin position="358"/>
        <end position="379"/>
    </location>
</feature>
<feature type="compositionally biased region" description="Low complexity" evidence="6">
    <location>
        <begin position="41"/>
        <end position="51"/>
    </location>
</feature>
<feature type="active site" description="Proton acceptor" evidence="3 5">
    <location>
        <position position="179"/>
    </location>
</feature>
<feature type="binding site" evidence="3">
    <location>
        <begin position="18"/>
        <end position="26"/>
    </location>
    <ligand>
        <name>ATP</name>
        <dbReference type="ChEBI" id="CHEBI:30616"/>
    </ligand>
</feature>
<feature type="binding site" evidence="3">
    <location>
        <position position="55"/>
    </location>
    <ligand>
        <name>ATP</name>
        <dbReference type="ChEBI" id="CHEBI:30616"/>
    </ligand>
</feature>
<feature type="binding site" evidence="4">
    <location>
        <position position="421"/>
    </location>
    <ligand>
        <name>Ca(2+)</name>
        <dbReference type="ChEBI" id="CHEBI:29108"/>
        <label>1</label>
    </ligand>
</feature>
<feature type="binding site" evidence="4">
    <location>
        <position position="423"/>
    </location>
    <ligand>
        <name>Ca(2+)</name>
        <dbReference type="ChEBI" id="CHEBI:29108"/>
        <label>1</label>
    </ligand>
</feature>
<feature type="binding site" evidence="4">
    <location>
        <position position="425"/>
    </location>
    <ligand>
        <name>Ca(2+)</name>
        <dbReference type="ChEBI" id="CHEBI:29108"/>
        <label>1</label>
    </ligand>
</feature>
<feature type="binding site" evidence="4">
    <location>
        <position position="427"/>
    </location>
    <ligand>
        <name>Ca(2+)</name>
        <dbReference type="ChEBI" id="CHEBI:29108"/>
        <label>1</label>
    </ligand>
</feature>
<feature type="binding site" evidence="4">
    <location>
        <position position="432"/>
    </location>
    <ligand>
        <name>Ca(2+)</name>
        <dbReference type="ChEBI" id="CHEBI:29108"/>
        <label>1</label>
    </ligand>
</feature>
<feature type="binding site" evidence="4">
    <location>
        <position position="457"/>
    </location>
    <ligand>
        <name>Ca(2+)</name>
        <dbReference type="ChEBI" id="CHEBI:29108"/>
        <label>2</label>
    </ligand>
</feature>
<feature type="binding site" evidence="4">
    <location>
        <position position="459"/>
    </location>
    <ligand>
        <name>Ca(2+)</name>
        <dbReference type="ChEBI" id="CHEBI:29108"/>
        <label>2</label>
    </ligand>
</feature>
<feature type="binding site" evidence="4">
    <location>
        <position position="461"/>
    </location>
    <ligand>
        <name>Ca(2+)</name>
        <dbReference type="ChEBI" id="CHEBI:29108"/>
        <label>2</label>
    </ligand>
</feature>
<feature type="binding site" evidence="4">
    <location>
        <position position="463"/>
    </location>
    <ligand>
        <name>Ca(2+)</name>
        <dbReference type="ChEBI" id="CHEBI:29108"/>
        <label>2</label>
    </ligand>
</feature>
<feature type="binding site" evidence="4">
    <location>
        <position position="468"/>
    </location>
    <ligand>
        <name>Ca(2+)</name>
        <dbReference type="ChEBI" id="CHEBI:29108"/>
        <label>2</label>
    </ligand>
</feature>
<feature type="binding site" evidence="4">
    <location>
        <position position="499"/>
    </location>
    <ligand>
        <name>Ca(2+)</name>
        <dbReference type="ChEBI" id="CHEBI:29108"/>
        <label>3</label>
    </ligand>
</feature>
<feature type="binding site" evidence="4">
    <location>
        <position position="501"/>
    </location>
    <ligand>
        <name>Ca(2+)</name>
        <dbReference type="ChEBI" id="CHEBI:29108"/>
        <label>3</label>
    </ligand>
</feature>
<feature type="binding site" evidence="4">
    <location>
        <position position="503"/>
    </location>
    <ligand>
        <name>Ca(2+)</name>
        <dbReference type="ChEBI" id="CHEBI:29108"/>
        <label>3</label>
    </ligand>
</feature>
<feature type="binding site" evidence="4">
    <location>
        <position position="505"/>
    </location>
    <ligand>
        <name>Ca(2+)</name>
        <dbReference type="ChEBI" id="CHEBI:29108"/>
        <label>3</label>
    </ligand>
</feature>
<feature type="binding site" evidence="4">
    <location>
        <position position="510"/>
    </location>
    <ligand>
        <name>Ca(2+)</name>
        <dbReference type="ChEBI" id="CHEBI:29108"/>
        <label>3</label>
    </ligand>
</feature>
<feature type="modified residue" description="Phosphothreonine" evidence="1">
    <location>
        <position position="279"/>
    </location>
</feature>
<feature type="mutagenesis site" description="In DK22; loss of nodulation and mycorrhizal infection." evidence="7">
    <original>S</original>
    <variation>F</variation>
    <location>
        <position position="24"/>
    </location>
</feature>
<feature type="mutagenesis site" description="In DK9; loss of nodulation and mycorrhizal infection." evidence="7">
    <original>G</original>
    <variation>R</variation>
    <location>
        <position position="202"/>
    </location>
</feature>
<feature type="non-terminal residue">
    <location>
        <position position="527"/>
    </location>
</feature>
<evidence type="ECO:0000250" key="1"/>
<evidence type="ECO:0000255" key="2"/>
<evidence type="ECO:0000255" key="3">
    <source>
        <dbReference type="PROSITE-ProRule" id="PRU00159"/>
    </source>
</evidence>
<evidence type="ECO:0000255" key="4">
    <source>
        <dbReference type="PROSITE-ProRule" id="PRU00448"/>
    </source>
</evidence>
<evidence type="ECO:0000255" key="5">
    <source>
        <dbReference type="PROSITE-ProRule" id="PRU10027"/>
    </source>
</evidence>
<evidence type="ECO:0000256" key="6">
    <source>
        <dbReference type="SAM" id="MobiDB-lite"/>
    </source>
</evidence>
<evidence type="ECO:0000269" key="7">
    <source>
    </source>
</evidence>
<evidence type="ECO:0000305" key="8"/>
<protein>
    <recommendedName>
        <fullName>Calcium and calcium/calmodulin-dependent serine/threonine-protein kinase</fullName>
        <ecNumber>2.7.11.17</ecNumber>
    </recommendedName>
    <alternativeName>
        <fullName>Ps-SYM9</fullName>
    </alternativeName>
    <alternativeName>
        <fullName>PsCCaMK</fullName>
    </alternativeName>
</protein>
<keyword id="KW-0067">ATP-binding</keyword>
<keyword id="KW-0106">Calcium</keyword>
<keyword id="KW-0112">Calmodulin-binding</keyword>
<keyword id="KW-0175">Coiled coil</keyword>
<keyword id="KW-0418">Kinase</keyword>
<keyword id="KW-0472">Membrane</keyword>
<keyword id="KW-0479">Metal-binding</keyword>
<keyword id="KW-0536">Nodulation</keyword>
<keyword id="KW-0547">Nucleotide-binding</keyword>
<keyword id="KW-0597">Phosphoprotein</keyword>
<keyword id="KW-0677">Repeat</keyword>
<keyword id="KW-0723">Serine/threonine-protein kinase</keyword>
<keyword id="KW-0808">Transferase</keyword>
<keyword id="KW-0812">Transmembrane</keyword>
<keyword id="KW-1133">Transmembrane helix</keyword>